<organism>
    <name type="scientific">Francisella tularensis subsp. tularensis (strain FSC 198)</name>
    <dbReference type="NCBI Taxonomy" id="393115"/>
    <lineage>
        <taxon>Bacteria</taxon>
        <taxon>Pseudomonadati</taxon>
        <taxon>Pseudomonadota</taxon>
        <taxon>Gammaproteobacteria</taxon>
        <taxon>Thiotrichales</taxon>
        <taxon>Francisellaceae</taxon>
        <taxon>Francisella</taxon>
    </lineage>
</organism>
<reference key="1">
    <citation type="journal article" date="2007" name="PLoS ONE">
        <title>Genome sequencing shows that European isolates of Francisella tularensis subspecies tularensis are almost identical to US laboratory strain Schu S4.</title>
        <authorList>
            <person name="Chaudhuri R.R."/>
            <person name="Ren C.-P."/>
            <person name="Desmond L."/>
            <person name="Vincent G.A."/>
            <person name="Silman N.J."/>
            <person name="Brehm J.K."/>
            <person name="Elmore M.J."/>
            <person name="Hudson M.J."/>
            <person name="Forsman M."/>
            <person name="Isherwood K.E."/>
            <person name="Gurycova D."/>
            <person name="Minton N.P."/>
            <person name="Titball R.W."/>
            <person name="Pallen M.J."/>
            <person name="Vipond R."/>
        </authorList>
    </citation>
    <scope>NUCLEOTIDE SEQUENCE [LARGE SCALE GENOMIC DNA]</scope>
    <source>
        <strain>FSC 198</strain>
    </source>
</reference>
<name>DCD_FRAT1</name>
<dbReference type="EC" id="3.5.4.13" evidence="1"/>
<dbReference type="EMBL" id="AM286280">
    <property type="protein sequence ID" value="CAL09009.1"/>
    <property type="molecule type" value="Genomic_DNA"/>
</dbReference>
<dbReference type="RefSeq" id="WP_003016296.1">
    <property type="nucleotide sequence ID" value="NC_008245.1"/>
</dbReference>
<dbReference type="SMR" id="Q14HL3"/>
<dbReference type="GeneID" id="75265387"/>
<dbReference type="KEGG" id="ftf:FTF0993c"/>
<dbReference type="HOGENOM" id="CLU_087476_4_0_6"/>
<dbReference type="UniPathway" id="UPA00610">
    <property type="reaction ID" value="UER00665"/>
</dbReference>
<dbReference type="GO" id="GO:0008829">
    <property type="term" value="F:dCTP deaminase activity"/>
    <property type="evidence" value="ECO:0007669"/>
    <property type="project" value="UniProtKB-UniRule"/>
</dbReference>
<dbReference type="GO" id="GO:0000166">
    <property type="term" value="F:nucleotide binding"/>
    <property type="evidence" value="ECO:0007669"/>
    <property type="project" value="UniProtKB-KW"/>
</dbReference>
<dbReference type="GO" id="GO:0006226">
    <property type="term" value="P:dUMP biosynthetic process"/>
    <property type="evidence" value="ECO:0007669"/>
    <property type="project" value="UniProtKB-UniPathway"/>
</dbReference>
<dbReference type="GO" id="GO:0006229">
    <property type="term" value="P:dUTP biosynthetic process"/>
    <property type="evidence" value="ECO:0007669"/>
    <property type="project" value="UniProtKB-UniRule"/>
</dbReference>
<dbReference type="GO" id="GO:0015949">
    <property type="term" value="P:nucleobase-containing small molecule interconversion"/>
    <property type="evidence" value="ECO:0007669"/>
    <property type="project" value="TreeGrafter"/>
</dbReference>
<dbReference type="CDD" id="cd07557">
    <property type="entry name" value="trimeric_dUTPase"/>
    <property type="match status" value="1"/>
</dbReference>
<dbReference type="FunFam" id="2.70.40.10:FF:000001">
    <property type="entry name" value="dCTP deaminase"/>
    <property type="match status" value="1"/>
</dbReference>
<dbReference type="Gene3D" id="2.70.40.10">
    <property type="match status" value="1"/>
</dbReference>
<dbReference type="HAMAP" id="MF_00146">
    <property type="entry name" value="dCTP_deaminase"/>
    <property type="match status" value="1"/>
</dbReference>
<dbReference type="InterPro" id="IPR011962">
    <property type="entry name" value="dCTP_deaminase"/>
</dbReference>
<dbReference type="InterPro" id="IPR036157">
    <property type="entry name" value="dUTPase-like_sf"/>
</dbReference>
<dbReference type="InterPro" id="IPR033704">
    <property type="entry name" value="dUTPase_trimeric"/>
</dbReference>
<dbReference type="NCBIfam" id="TIGR02274">
    <property type="entry name" value="dCTP_deam"/>
    <property type="match status" value="1"/>
</dbReference>
<dbReference type="PANTHER" id="PTHR42680">
    <property type="entry name" value="DCTP DEAMINASE"/>
    <property type="match status" value="1"/>
</dbReference>
<dbReference type="PANTHER" id="PTHR42680:SF3">
    <property type="entry name" value="DCTP DEAMINASE"/>
    <property type="match status" value="1"/>
</dbReference>
<dbReference type="Pfam" id="PF22769">
    <property type="entry name" value="DCD"/>
    <property type="match status" value="1"/>
</dbReference>
<dbReference type="SUPFAM" id="SSF51283">
    <property type="entry name" value="dUTPase-like"/>
    <property type="match status" value="1"/>
</dbReference>
<protein>
    <recommendedName>
        <fullName evidence="1">dCTP deaminase</fullName>
        <ecNumber evidence="1">3.5.4.13</ecNumber>
    </recommendedName>
    <alternativeName>
        <fullName evidence="1">Deoxycytidine triphosphate deaminase</fullName>
    </alternativeName>
</protein>
<gene>
    <name evidence="1" type="primary">dcd</name>
    <name type="ordered locus">FTF0993c</name>
</gene>
<evidence type="ECO:0000255" key="1">
    <source>
        <dbReference type="HAMAP-Rule" id="MF_00146"/>
    </source>
</evidence>
<feature type="chain" id="PRO_1000009723" description="dCTP deaminase">
    <location>
        <begin position="1"/>
        <end position="188"/>
    </location>
</feature>
<feature type="active site" description="Proton donor/acceptor" evidence="1">
    <location>
        <position position="137"/>
    </location>
</feature>
<feature type="binding site" evidence="1">
    <location>
        <begin position="111"/>
        <end position="116"/>
    </location>
    <ligand>
        <name>dCTP</name>
        <dbReference type="ChEBI" id="CHEBI:61481"/>
    </ligand>
</feature>
<feature type="binding site" evidence="1">
    <location>
        <begin position="135"/>
        <end position="137"/>
    </location>
    <ligand>
        <name>dCTP</name>
        <dbReference type="ChEBI" id="CHEBI:61481"/>
    </ligand>
</feature>
<feature type="binding site" evidence="1">
    <location>
        <position position="156"/>
    </location>
    <ligand>
        <name>dCTP</name>
        <dbReference type="ChEBI" id="CHEBI:61481"/>
    </ligand>
</feature>
<feature type="binding site" evidence="1">
    <location>
        <position position="170"/>
    </location>
    <ligand>
        <name>dCTP</name>
        <dbReference type="ChEBI" id="CHEBI:61481"/>
    </ligand>
</feature>
<feature type="binding site" evidence="1">
    <location>
        <position position="180"/>
    </location>
    <ligand>
        <name>dCTP</name>
        <dbReference type="ChEBI" id="CHEBI:61481"/>
    </ligand>
</feature>
<accession>Q14HL3</accession>
<comment type="function">
    <text evidence="1">Catalyzes the deamination of dCTP to dUTP.</text>
</comment>
<comment type="catalytic activity">
    <reaction evidence="1">
        <text>dCTP + H2O + H(+) = dUTP + NH4(+)</text>
        <dbReference type="Rhea" id="RHEA:22680"/>
        <dbReference type="ChEBI" id="CHEBI:15377"/>
        <dbReference type="ChEBI" id="CHEBI:15378"/>
        <dbReference type="ChEBI" id="CHEBI:28938"/>
        <dbReference type="ChEBI" id="CHEBI:61481"/>
        <dbReference type="ChEBI" id="CHEBI:61555"/>
        <dbReference type="EC" id="3.5.4.13"/>
    </reaction>
</comment>
<comment type="pathway">
    <text evidence="1">Pyrimidine metabolism; dUMP biosynthesis; dUMP from dCTP (dUTP route): step 1/2.</text>
</comment>
<comment type="subunit">
    <text evidence="1">Homotrimer.</text>
</comment>
<comment type="similarity">
    <text evidence="1">Belongs to the dCTP deaminase family.</text>
</comment>
<proteinExistence type="inferred from homology"/>
<sequence length="188" mass="21124">MTIKSDKWIKKMSQEHNMIEPFEAGQVKVINNQKIVSYGTSSYGYDVRCADEFKIFTNINSSIVDPKNFNDKNFVDFKGDVCIIPPNSFALARTVEKFKIPRDTLVVCLGKSTYARCGIIVNVTPLEPEWEGYVTLEFSNTTPLPAKIYANEGVAQMLFFQSDEECETSYADKGGKYQGQVGVTLPKC</sequence>
<keyword id="KW-0378">Hydrolase</keyword>
<keyword id="KW-0546">Nucleotide metabolism</keyword>
<keyword id="KW-0547">Nucleotide-binding</keyword>